<name>MED18_YEAST</name>
<keyword id="KW-0002">3D-structure</keyword>
<keyword id="KW-0010">Activator</keyword>
<keyword id="KW-0539">Nucleus</keyword>
<keyword id="KW-1185">Reference proteome</keyword>
<keyword id="KW-0804">Transcription</keyword>
<keyword id="KW-0805">Transcription regulation</keyword>
<protein>
    <recommendedName>
        <fullName>Mediator of RNA polymerase II transcription subunit 18</fullName>
    </recommendedName>
    <alternativeName>
        <fullName>Mediator complex subunit 18</fullName>
    </alternativeName>
    <alternativeName>
        <fullName>Suppressor of RNA polymerase B 5</fullName>
    </alternativeName>
</protein>
<evidence type="ECO:0000256" key="1">
    <source>
        <dbReference type="SAM" id="MobiDB-lite"/>
    </source>
</evidence>
<evidence type="ECO:0000269" key="2">
    <source>
    </source>
</evidence>
<evidence type="ECO:0000269" key="3">
    <source>
    </source>
</evidence>
<evidence type="ECO:0000269" key="4">
    <source>
    </source>
</evidence>
<evidence type="ECO:0000269" key="5">
    <source>
    </source>
</evidence>
<evidence type="ECO:0000269" key="6">
    <source>
    </source>
</evidence>
<evidence type="ECO:0000269" key="7">
    <source>
    </source>
</evidence>
<evidence type="ECO:0000269" key="8">
    <source>
    </source>
</evidence>
<evidence type="ECO:0000269" key="9">
    <source>
    </source>
</evidence>
<evidence type="ECO:0000269" key="10">
    <source>
    </source>
</evidence>
<evidence type="ECO:0000269" key="11">
    <source>
    </source>
</evidence>
<evidence type="ECO:0000269" key="12">
    <source>
    </source>
</evidence>
<evidence type="ECO:0000269" key="13">
    <source>
    </source>
</evidence>
<evidence type="ECO:0000305" key="14"/>
<evidence type="ECO:0007829" key="15">
    <source>
        <dbReference type="PDB" id="2HZM"/>
    </source>
</evidence>
<evidence type="ECO:0007829" key="16">
    <source>
        <dbReference type="PDB" id="2HZS"/>
    </source>
</evidence>
<feature type="chain" id="PRO_0000096368" description="Mediator of RNA polymerase II transcription subunit 18">
    <location>
        <begin position="1"/>
        <end position="307"/>
    </location>
</feature>
<feature type="region of interest" description="Disordered" evidence="1">
    <location>
        <begin position="117"/>
        <end position="162"/>
    </location>
</feature>
<feature type="compositionally biased region" description="Polar residues" evidence="1">
    <location>
        <begin position="117"/>
        <end position="126"/>
    </location>
</feature>
<feature type="mutagenesis site" description="In SRB5-1; suppresses the phenotypic defects of an RNA polymerase II CTD truncation." evidence="11">
    <original>T</original>
    <variation>I</variation>
    <location>
        <position position="22"/>
    </location>
</feature>
<feature type="sequence conflict" description="In Ref. 4; AAT93036." evidence="14" ref="4">
    <original>K</original>
    <variation>R</variation>
    <location>
        <position position="225"/>
    </location>
</feature>
<feature type="strand" evidence="15">
    <location>
        <begin position="3"/>
        <end position="12"/>
    </location>
</feature>
<feature type="helix" evidence="15">
    <location>
        <begin position="13"/>
        <end position="15"/>
    </location>
</feature>
<feature type="helix" evidence="15">
    <location>
        <begin position="16"/>
        <end position="27"/>
    </location>
</feature>
<feature type="strand" evidence="15">
    <location>
        <begin position="32"/>
        <end position="43"/>
    </location>
</feature>
<feature type="helix" evidence="15">
    <location>
        <begin position="45"/>
        <end position="47"/>
    </location>
</feature>
<feature type="strand" evidence="15">
    <location>
        <begin position="64"/>
        <end position="68"/>
    </location>
</feature>
<feature type="helix" evidence="15">
    <location>
        <begin position="72"/>
        <end position="74"/>
    </location>
</feature>
<feature type="helix" evidence="16">
    <location>
        <begin position="75"/>
        <end position="78"/>
    </location>
</feature>
<feature type="turn" evidence="16">
    <location>
        <begin position="79"/>
        <end position="81"/>
    </location>
</feature>
<feature type="helix" evidence="15">
    <location>
        <begin position="87"/>
        <end position="92"/>
    </location>
</feature>
<feature type="strand" evidence="15">
    <location>
        <begin position="95"/>
        <end position="97"/>
    </location>
</feature>
<feature type="strand" evidence="15">
    <location>
        <begin position="164"/>
        <end position="170"/>
    </location>
</feature>
<feature type="helix" evidence="15">
    <location>
        <begin position="173"/>
        <end position="175"/>
    </location>
</feature>
<feature type="strand" evidence="15">
    <location>
        <begin position="180"/>
        <end position="195"/>
    </location>
</feature>
<feature type="helix" evidence="15">
    <location>
        <begin position="200"/>
        <end position="206"/>
    </location>
</feature>
<feature type="strand" evidence="15">
    <location>
        <begin position="209"/>
        <end position="223"/>
    </location>
</feature>
<feature type="helix" evidence="15">
    <location>
        <begin position="225"/>
        <end position="227"/>
    </location>
</feature>
<feature type="strand" evidence="15">
    <location>
        <begin position="229"/>
        <end position="239"/>
    </location>
</feature>
<feature type="strand" evidence="15">
    <location>
        <begin position="242"/>
        <end position="245"/>
    </location>
</feature>
<feature type="turn" evidence="15">
    <location>
        <begin position="246"/>
        <end position="249"/>
    </location>
</feature>
<feature type="strand" evidence="15">
    <location>
        <begin position="250"/>
        <end position="259"/>
    </location>
</feature>
<feature type="helix" evidence="15">
    <location>
        <begin position="265"/>
        <end position="281"/>
    </location>
</feature>
<feature type="turn" evidence="15">
    <location>
        <begin position="282"/>
        <end position="285"/>
    </location>
</feature>
<feature type="helix" evidence="15">
    <location>
        <begin position="293"/>
        <end position="297"/>
    </location>
</feature>
<feature type="helix" evidence="15">
    <location>
        <begin position="299"/>
        <end position="301"/>
    </location>
</feature>
<reference key="1">
    <citation type="journal article" date="1993" name="Cell">
        <title>A multisubunit complex associated with the RNA polymerase II CTD and TATA-binding protein in yeast.</title>
        <authorList>
            <person name="Thompson C.M."/>
            <person name="Koleske A.J."/>
            <person name="Chao D.M."/>
            <person name="Young R.A."/>
        </authorList>
    </citation>
    <scope>NUCLEOTIDE SEQUENCE [GENOMIC DNA]</scope>
    <scope>MUTAGENESIS OF THR-22</scope>
    <source>
        <strain>Z28</strain>
    </source>
</reference>
<reference key="2">
    <citation type="journal article" date="1997" name="Nature">
        <title>The nucleotide sequence of Saccharomyces cerevisiae chromosome VII.</title>
        <authorList>
            <person name="Tettelin H."/>
            <person name="Agostoni-Carbone M.L."/>
            <person name="Albermann K."/>
            <person name="Albers M."/>
            <person name="Arroyo J."/>
            <person name="Backes U."/>
            <person name="Barreiros T."/>
            <person name="Bertani I."/>
            <person name="Bjourson A.J."/>
            <person name="Brueckner M."/>
            <person name="Bruschi C.V."/>
            <person name="Carignani G."/>
            <person name="Castagnoli L."/>
            <person name="Cerdan E."/>
            <person name="Clemente M.L."/>
            <person name="Coblenz A."/>
            <person name="Coglievina M."/>
            <person name="Coissac E."/>
            <person name="Defoor E."/>
            <person name="Del Bino S."/>
            <person name="Delius H."/>
            <person name="Delneri D."/>
            <person name="de Wergifosse P."/>
            <person name="Dujon B."/>
            <person name="Durand P."/>
            <person name="Entian K.-D."/>
            <person name="Eraso P."/>
            <person name="Escribano V."/>
            <person name="Fabiani L."/>
            <person name="Fartmann B."/>
            <person name="Feroli F."/>
            <person name="Feuermann M."/>
            <person name="Frontali L."/>
            <person name="Garcia-Gonzalez M."/>
            <person name="Garcia-Saez M.I."/>
            <person name="Goffeau A."/>
            <person name="Guerreiro P."/>
            <person name="Hani J."/>
            <person name="Hansen M."/>
            <person name="Hebling U."/>
            <person name="Hernandez K."/>
            <person name="Heumann K."/>
            <person name="Hilger F."/>
            <person name="Hofmann B."/>
            <person name="Indge K.J."/>
            <person name="James C.M."/>
            <person name="Klima R."/>
            <person name="Koetter P."/>
            <person name="Kramer B."/>
            <person name="Kramer W."/>
            <person name="Lauquin G."/>
            <person name="Leuther H."/>
            <person name="Louis E.J."/>
            <person name="Maillier E."/>
            <person name="Marconi A."/>
            <person name="Martegani E."/>
            <person name="Mazon M.J."/>
            <person name="Mazzoni C."/>
            <person name="McReynolds A.D.K."/>
            <person name="Melchioretto P."/>
            <person name="Mewes H.-W."/>
            <person name="Minenkova O."/>
            <person name="Mueller-Auer S."/>
            <person name="Nawrocki A."/>
            <person name="Netter P."/>
            <person name="Neu R."/>
            <person name="Nombela C."/>
            <person name="Oliver S.G."/>
            <person name="Panzeri L."/>
            <person name="Paoluzi S."/>
            <person name="Plevani P."/>
            <person name="Portetelle D."/>
            <person name="Portillo F."/>
            <person name="Potier S."/>
            <person name="Purnelle B."/>
            <person name="Rieger M."/>
            <person name="Riles L."/>
            <person name="Rinaldi T."/>
            <person name="Robben J."/>
            <person name="Rodrigues-Pousada C."/>
            <person name="Rodriguez-Belmonte E."/>
            <person name="Rodriguez-Torres A.M."/>
            <person name="Rose M."/>
            <person name="Ruzzi M."/>
            <person name="Saliola M."/>
            <person name="Sanchez-Perez M."/>
            <person name="Schaefer B."/>
            <person name="Schaefer M."/>
            <person name="Scharfe M."/>
            <person name="Schmidheini T."/>
            <person name="Schreer A."/>
            <person name="Skala J."/>
            <person name="Souciet J.-L."/>
            <person name="Steensma H.Y."/>
            <person name="Talla E."/>
            <person name="Thierry A."/>
            <person name="Vandenbol M."/>
            <person name="van der Aart Q.J.M."/>
            <person name="Van Dyck L."/>
            <person name="Vanoni M."/>
            <person name="Verhasselt P."/>
            <person name="Voet M."/>
            <person name="Volckaert G."/>
            <person name="Wambutt R."/>
            <person name="Watson M.D."/>
            <person name="Weber N."/>
            <person name="Wedler E."/>
            <person name="Wedler H."/>
            <person name="Wipfli P."/>
            <person name="Wolf K."/>
            <person name="Wright L.F."/>
            <person name="Zaccaria P."/>
            <person name="Zimmermann M."/>
            <person name="Zollner A."/>
            <person name="Kleine K."/>
        </authorList>
    </citation>
    <scope>NUCLEOTIDE SEQUENCE [LARGE SCALE GENOMIC DNA]</scope>
    <source>
        <strain>ATCC 204508 / S288c</strain>
    </source>
</reference>
<reference key="3">
    <citation type="journal article" date="2014" name="G3 (Bethesda)">
        <title>The reference genome sequence of Saccharomyces cerevisiae: Then and now.</title>
        <authorList>
            <person name="Engel S.R."/>
            <person name="Dietrich F.S."/>
            <person name="Fisk D.G."/>
            <person name="Binkley G."/>
            <person name="Balakrishnan R."/>
            <person name="Costanzo M.C."/>
            <person name="Dwight S.S."/>
            <person name="Hitz B.C."/>
            <person name="Karra K."/>
            <person name="Nash R.S."/>
            <person name="Weng S."/>
            <person name="Wong E.D."/>
            <person name="Lloyd P."/>
            <person name="Skrzypek M.S."/>
            <person name="Miyasato S.R."/>
            <person name="Simison M."/>
            <person name="Cherry J.M."/>
        </authorList>
    </citation>
    <scope>GENOME REANNOTATION</scope>
    <source>
        <strain>ATCC 204508 / S288c</strain>
    </source>
</reference>
<reference key="4">
    <citation type="journal article" date="2007" name="Genome Res.">
        <title>Approaching a complete repository of sequence-verified protein-encoding clones for Saccharomyces cerevisiae.</title>
        <authorList>
            <person name="Hu Y."/>
            <person name="Rolfs A."/>
            <person name="Bhullar B."/>
            <person name="Murthy T.V.S."/>
            <person name="Zhu C."/>
            <person name="Berger M.F."/>
            <person name="Camargo A.A."/>
            <person name="Kelley F."/>
            <person name="McCarron S."/>
            <person name="Jepson D."/>
            <person name="Richardson A."/>
            <person name="Raphael J."/>
            <person name="Moreira D."/>
            <person name="Taycher E."/>
            <person name="Zuo D."/>
            <person name="Mohr S."/>
            <person name="Kane M.F."/>
            <person name="Williamson J."/>
            <person name="Simpson A.J.G."/>
            <person name="Bulyk M.L."/>
            <person name="Harlow E."/>
            <person name="Marsischky G."/>
            <person name="Kolodner R.D."/>
            <person name="LaBaer J."/>
        </authorList>
    </citation>
    <scope>NUCLEOTIDE SEQUENCE [GENOMIC DNA]</scope>
    <source>
        <strain>ATCC 204508 / S288c</strain>
    </source>
</reference>
<reference key="5">
    <citation type="journal article" date="1994" name="Cell">
        <title>A multiprotein mediator of transcriptional activation and its interaction with the C-terminal repeat domain of RNA polymerase II.</title>
        <authorList>
            <person name="Kim Y.-J."/>
            <person name="Bjoerklund S."/>
            <person name="Li Y."/>
            <person name="Sayre M.H."/>
            <person name="Kornberg R.D."/>
        </authorList>
    </citation>
    <scope>COMPONENT OF MEDIATOR COMPLEX</scope>
</reference>
<reference key="6">
    <citation type="journal article" date="1998" name="Cell">
        <title>Dissecting the regulatory circuitry of a eukaryotic genome.</title>
        <authorList>
            <person name="Holstege F.C.P."/>
            <person name="Jennings E.G."/>
            <person name="Wyrick J.J."/>
            <person name="Lee T.I."/>
            <person name="Hengartner C.J."/>
            <person name="Green M.R."/>
            <person name="Golub T.R."/>
            <person name="Lander E.S."/>
            <person name="Young R.A."/>
        </authorList>
    </citation>
    <scope>FUNCTION</scope>
</reference>
<reference key="7">
    <citation type="journal article" date="1998" name="Mol. Cell">
        <title>An activator target in the RNA polymerase II holoenzyme.</title>
        <authorList>
            <person name="Koh S.S."/>
            <person name="Ansari A.Z."/>
            <person name="Ptashne M."/>
            <person name="Young R.A."/>
        </authorList>
    </citation>
    <scope>INTERACTION WITH SRB2</scope>
</reference>
<reference key="8">
    <citation type="journal article" date="2001" name="J. Biol. Chem.">
        <title>The structural and functional organization of the yeast mediator complex.</title>
        <authorList>
            <person name="Kang J.S."/>
            <person name="Kim S.H."/>
            <person name="Hwang M.S."/>
            <person name="Han S.J."/>
            <person name="Lee Y.C."/>
            <person name="Kim Y.-J."/>
        </authorList>
    </citation>
    <scope>INTERACTION WITH MED8</scope>
    <scope>FUNCTION OF THE MEDIATOR COMPLEX</scope>
    <scope>INTERACTION OF THE MEDIATOR COMPLEX WITH RNA POLYMERASE II</scope>
</reference>
<reference key="9">
    <citation type="journal article" date="2003" name="Nature">
        <title>Global analysis of protein localization in budding yeast.</title>
        <authorList>
            <person name="Huh W.-K."/>
            <person name="Falvo J.V."/>
            <person name="Gerke L.C."/>
            <person name="Carroll A.S."/>
            <person name="Howson R.W."/>
            <person name="Weissman J.S."/>
            <person name="O'Shea E.K."/>
        </authorList>
    </citation>
    <scope>SUBCELLULAR LOCATION [LARGE SCALE ANALYSIS]</scope>
</reference>
<reference key="10">
    <citation type="journal article" date="2003" name="Nature">
        <title>Global analysis of protein expression in yeast.</title>
        <authorList>
            <person name="Ghaemmaghami S."/>
            <person name="Huh W.-K."/>
            <person name="Bower K."/>
            <person name="Howson R.W."/>
            <person name="Belle A."/>
            <person name="Dephoure N."/>
            <person name="O'Shea E.K."/>
            <person name="Weissman J.S."/>
        </authorList>
    </citation>
    <scope>LEVEL OF PROTEIN EXPRESSION [LARGE SCALE ANALYSIS]</scope>
</reference>
<reference key="11">
    <citation type="journal article" date="2004" name="Mol. Cell">
        <title>A unified nomenclature for protein subunits of mediator complexes linking transcriptional regulators to RNA polymerase II.</title>
        <authorList>
            <person name="Bourbon H.-M."/>
            <person name="Aguilera A."/>
            <person name="Ansari A.Z."/>
            <person name="Asturias F.J."/>
            <person name="Berk A.J."/>
            <person name="Bjoerklund S."/>
            <person name="Blackwell T.K."/>
            <person name="Borggrefe T."/>
            <person name="Carey M."/>
            <person name="Carlson M."/>
            <person name="Conaway J.W."/>
            <person name="Conaway R.C."/>
            <person name="Emmons S.W."/>
            <person name="Fondell J.D."/>
            <person name="Freedman L.P."/>
            <person name="Fukasawa T."/>
            <person name="Gustafsson C.M."/>
            <person name="Han M."/>
            <person name="He X."/>
            <person name="Herman P.K."/>
            <person name="Hinnebusch A.G."/>
            <person name="Holmberg S."/>
            <person name="Holstege F.C.P."/>
            <person name="Jaehning J.A."/>
            <person name="Kim Y.-J."/>
            <person name="Kuras L."/>
            <person name="Leutz A."/>
            <person name="Lis J.T."/>
            <person name="Meisterernest M."/>
            <person name="Naeaer A.M."/>
            <person name="Nasmyth K."/>
            <person name="Parvin J.D."/>
            <person name="Ptashne M."/>
            <person name="Reinberg D."/>
            <person name="Ronne H."/>
            <person name="Sadowski I."/>
            <person name="Sakurai H."/>
            <person name="Sipiczki M."/>
            <person name="Sternberg P.W."/>
            <person name="Stillman D.J."/>
            <person name="Strich R."/>
            <person name="Struhl K."/>
            <person name="Svejstrup J.Q."/>
            <person name="Tuck S."/>
            <person name="Winston F."/>
            <person name="Roeder R.G."/>
            <person name="Kornberg R.D."/>
        </authorList>
    </citation>
    <scope>NOMENCLATURE</scope>
</reference>
<reference key="12">
    <citation type="journal article" date="2004" name="Nucleic Acids Res.">
        <title>A high resolution protein interaction map of the yeast Mediator complex.</title>
        <authorList>
            <person name="Guglielmi B."/>
            <person name="van Berkum N.L."/>
            <person name="Klapholz B."/>
            <person name="Bijma T."/>
            <person name="Boube M."/>
            <person name="Boschiero C."/>
            <person name="Bourbon H.-M."/>
            <person name="Holstege F.C.P."/>
            <person name="Werner M."/>
        </authorList>
    </citation>
    <scope>TOPOLOGY OF THE MEDIATOR COMPLEX</scope>
</reference>
<reference key="13">
    <citation type="journal article" date="2005" name="J. Biol. Chem.">
        <title>Preponderance of free mediator in the yeast Saccharomyces cerevisiae.</title>
        <authorList>
            <person name="Takagi Y."/>
            <person name="Chadick J.Z."/>
            <person name="Davis J.A."/>
            <person name="Asturias F.J."/>
        </authorList>
    </citation>
    <scope>CHARACTERIZATION OF THE MEDIATOR COMPLEX</scope>
</reference>
<reference key="14">
    <citation type="journal article" date="2005" name="J. Biol. Chem.">
        <title>Mediator and TFIIH govern carboxyl-terminal domain-dependent transcription in yeast extracts.</title>
        <authorList>
            <person name="Nair D."/>
            <person name="Kim Y."/>
            <person name="Myers L.C."/>
        </authorList>
    </citation>
    <scope>FUNCTION OF THE MEDIATOR COMPLEX</scope>
</reference>
<reference key="15">
    <citation type="journal article" date="2005" name="Mol. Cell">
        <title>Mediator expression profiling epistasis reveals a signal transduction pathway with antagonistic submodules and highly specific downstream targets.</title>
        <authorList>
            <person name="van de Peppel J."/>
            <person name="Kettelarij N."/>
            <person name="van Bakel H."/>
            <person name="Kockelkorn T.T.J.P."/>
            <person name="van Leenen D."/>
            <person name="Holstege F.C.P."/>
        </authorList>
    </citation>
    <scope>FUNCTION</scope>
</reference>
<reference key="16">
    <citation type="journal article" date="2006" name="J. Biol. Chem.">
        <title>Mediator as a general transcription factor.</title>
        <authorList>
            <person name="Takagi Y."/>
            <person name="Kornberg R.D."/>
        </authorList>
    </citation>
    <scope>FUNCTION OF THE MEDIATOR COMPLEX</scope>
</reference>
<reference key="17">
    <citation type="journal article" date="2007" name="J. Biol. Chem.">
        <title>Med19(Rox3) regulates intermodule interactions in the Saccharomyces cerevisiae mediator complex.</title>
        <authorList>
            <person name="Baidoobonso S.M."/>
            <person name="Guidi B.W."/>
            <person name="Myers L.C."/>
        </authorList>
    </citation>
    <scope>INTERACTION WITH MED1; MED8; CSE2 AND RGR1</scope>
    <scope>CHARACTERIZATION OF THE MEDIATOR COMPLEX</scope>
    <scope>INTERACTION OF THE MEDIATOR COMPLEX WITH RNA POLYMERASE II</scope>
</reference>
<reference key="18">
    <citation type="journal article" date="2002" name="Mol. Cell">
        <title>Structure of the yeast RNA polymerase II holoenzyme: mediator conformation and polymerase interaction.</title>
        <authorList>
            <person name="Davis J.A."/>
            <person name="Takagi Y."/>
            <person name="Kornberg R.D."/>
            <person name="Asturias F.J."/>
        </authorList>
    </citation>
    <scope>ELECTRON MICROSCOPY OF MEDIATOR COMPLEX IN COMPLEX WITH RNA POLYMERASE II</scope>
</reference>
<reference key="19">
    <citation type="journal article" date="2006" name="Mol. Cell">
        <title>Head module control of mediator interactions.</title>
        <authorList>
            <person name="Takagi Y."/>
            <person name="Calero G."/>
            <person name="Komori H."/>
            <person name="Brown J.A."/>
            <person name="Ehrensberger A.H."/>
            <person name="Hudmon A."/>
            <person name="Asturias F.J."/>
            <person name="Kornberg R.D."/>
        </authorList>
    </citation>
    <scope>ELECTRON MICROSCOPY OF THE MEDIATOR COMPLEX HEAD MODULE</scope>
    <scope>FUNCTION OF THE MEDIATOR COMPLEX HEAD MODULE</scope>
    <scope>INTERACTION OF THE MEDIATOR COMPLEX HEAD MODULE WITH RNA POLYMERASE II AND TFIIF</scope>
    <scope>INTERACTION WITH SRB2 AND SRB4</scope>
</reference>
<reference key="20">
    <citation type="journal article" date="2006" name="Nat. Struct. Mol. Biol.">
        <title>Structure and TBP binding of the Mediator head subcomplex Med8-Med18-Med20.</title>
        <authorList>
            <person name="Lariviere L."/>
            <person name="Geiger S."/>
            <person name="Hoeppner S."/>
            <person name="Roether S."/>
            <person name="Straesser K."/>
            <person name="Cramer P."/>
        </authorList>
    </citation>
    <scope>X-RAY CRYSTALLOGRAPHY (2.4 ANGSTROMS) OF 2-307 IN COMPLEX WITH MED8 AND SRB2</scope>
</reference>
<accession>P32585</accession>
<accession>D6VUN6</accession>
<accession>Q6B1R3</accession>
<gene>
    <name type="primary">SRB5</name>
    <name type="synonym">MED18</name>
    <name type="ordered locus">YGR104C</name>
</gene>
<organism>
    <name type="scientific">Saccharomyces cerevisiae (strain ATCC 204508 / S288c)</name>
    <name type="common">Baker's yeast</name>
    <dbReference type="NCBI Taxonomy" id="559292"/>
    <lineage>
        <taxon>Eukaryota</taxon>
        <taxon>Fungi</taxon>
        <taxon>Dikarya</taxon>
        <taxon>Ascomycota</taxon>
        <taxon>Saccharomycotina</taxon>
        <taxon>Saccharomycetes</taxon>
        <taxon>Saccharomycetales</taxon>
        <taxon>Saccharomycetaceae</taxon>
        <taxon>Saccharomyces</taxon>
    </lineage>
</organism>
<comment type="function">
    <text evidence="2 5 6 7 8 13">Component of the Mediator complex, a coactivator involved in the regulated transcription of nearly all RNA polymerase II-dependent genes. Mediator functions as a bridge to convey information from gene-specific regulatory proteins to the basal RNA polymerase II transcription machinery. The Mediator complex, having a compact conformation in its free form, is recruited to promoters by direct interactions with regulatory proteins and serves for the assembly of a functional preinitiation complex with RNA polymerase II and the general transcription factors. The Mediator complex unfolds to an extended conformation and partially surrounds RNA polymerase II, specifically interacting with the unphosphorylated form of the C-terminal domain (CTD) of RNA polymerase II. The Mediator complex dissociates from the RNA polymerase II holoenzyme and stays at the promoter when transcriptional elongation begins.</text>
</comment>
<comment type="subunit">
    <text evidence="2 8 9 10 12">Component of the Mediator complex, which is composed of at least 21 subunits that form three structurally distinct submodules. The Mediator head module contains MED6, MED8, MED11, SRB4/MED17, SRB5/MED18, ROX3/MED19, SRB2/MED20 and SRB6/MED22, the middle module contains MED1, MED4, NUT1/MED5, MED7, CSE2/MED9, NUT2/MED10, SRB7/MED21 and SOH1/MED31, and the tail module contains MED2, PGD1/MED3, RGR1/MED14, GAL11/MED15 and SIN4/MED16. The head and the middle modules interact directly with RNA polymerase II, whereas the elongated tail module interacts with gene-specific regulatory proteins. SRB5/MED18 interacts directly with MED8 and SRB2/MED20.</text>
</comment>
<comment type="interaction">
    <interactant intactId="EBI-18032">
        <id>P32585</id>
    </interactant>
    <interactant intactId="EBI-20932">
        <id>P38304</id>
        <label>MED8</label>
    </interactant>
    <organismsDiffer>false</organismsDiffer>
    <experiments>9</experiments>
</comment>
<comment type="interaction">
    <interactant intactId="EBI-18032">
        <id>P32585</id>
    </interactant>
    <interactant intactId="EBI-18018">
        <id>P34162</id>
        <label>SRB2</label>
    </interactant>
    <organismsDiffer>false</organismsDiffer>
    <experiments>7</experiments>
</comment>
<comment type="subcellular location">
    <subcellularLocation>
        <location evidence="3">Nucleus</location>
    </subcellularLocation>
</comment>
<comment type="miscellaneous">
    <text evidence="4">Present with 1011 molecules/cell in log phase SD medium.</text>
</comment>
<comment type="similarity">
    <text evidence="14">Belongs to the Mediator complex subunit 18 family.</text>
</comment>
<dbReference type="EMBL" id="L12028">
    <property type="protein sequence ID" value="AAB08012.1"/>
    <property type="molecule type" value="Genomic_DNA"/>
</dbReference>
<dbReference type="EMBL" id="Z72889">
    <property type="protein sequence ID" value="CAA97108.1"/>
    <property type="molecule type" value="Genomic_DNA"/>
</dbReference>
<dbReference type="EMBL" id="AY693017">
    <property type="protein sequence ID" value="AAT93036.1"/>
    <property type="molecule type" value="Genomic_DNA"/>
</dbReference>
<dbReference type="EMBL" id="BK006941">
    <property type="protein sequence ID" value="DAA08197.1"/>
    <property type="molecule type" value="Genomic_DNA"/>
</dbReference>
<dbReference type="PIR" id="B40711">
    <property type="entry name" value="B40711"/>
</dbReference>
<dbReference type="RefSeq" id="NP_011618.3">
    <property type="nucleotide sequence ID" value="NM_001181233.3"/>
</dbReference>
<dbReference type="PDB" id="2HZM">
    <property type="method" value="X-ray"/>
    <property type="resolution" value="2.40 A"/>
    <property type="chains" value="B/D/F/H=2-307"/>
</dbReference>
<dbReference type="PDB" id="2HZS">
    <property type="method" value="X-ray"/>
    <property type="resolution" value="2.70 A"/>
    <property type="chains" value="B/D/F/H=2-307"/>
</dbReference>
<dbReference type="PDB" id="3J1O">
    <property type="method" value="EM"/>
    <property type="resolution" value="16.00 A"/>
    <property type="chains" value="L=1-307"/>
</dbReference>
<dbReference type="PDB" id="3RJ1">
    <property type="method" value="X-ray"/>
    <property type="resolution" value="4.30 A"/>
    <property type="chains" value="E/L/S=1-307"/>
</dbReference>
<dbReference type="PDB" id="4GWP">
    <property type="method" value="X-ray"/>
    <property type="resolution" value="4.20 A"/>
    <property type="chains" value="E=1-307"/>
</dbReference>
<dbReference type="PDB" id="4GWQ">
    <property type="method" value="X-ray"/>
    <property type="resolution" value="4.50 A"/>
    <property type="chains" value="E=1-307"/>
</dbReference>
<dbReference type="PDB" id="4V1O">
    <property type="method" value="EM"/>
    <property type="resolution" value="9.70 A"/>
    <property type="chains" value="X=1-307"/>
</dbReference>
<dbReference type="PDB" id="5OQM">
    <property type="method" value="EM"/>
    <property type="resolution" value="5.80 A"/>
    <property type="chains" value="e=1-307"/>
</dbReference>
<dbReference type="PDB" id="5SVA">
    <property type="method" value="EM"/>
    <property type="resolution" value="15.30 A"/>
    <property type="chains" value="Q=1-307"/>
</dbReference>
<dbReference type="PDB" id="7UI9">
    <property type="method" value="EM"/>
    <property type="resolution" value="3.30 A"/>
    <property type="chains" value="r=1-307"/>
</dbReference>
<dbReference type="PDB" id="7UIF">
    <property type="method" value="EM"/>
    <property type="resolution" value="4.60 A"/>
    <property type="chains" value="r=1-307"/>
</dbReference>
<dbReference type="PDB" id="7UIG">
    <property type="method" value="EM"/>
    <property type="resolution" value="4.30 A"/>
    <property type="chains" value="r=1-307"/>
</dbReference>
<dbReference type="PDB" id="7UIO">
    <property type="method" value="EM"/>
    <property type="resolution" value="3.30 A"/>
    <property type="chains" value="Ar/Br=1-307"/>
</dbReference>
<dbReference type="PDB" id="8CEN">
    <property type="method" value="EM"/>
    <property type="resolution" value="3.00 A"/>
    <property type="chains" value="e=1-307"/>
</dbReference>
<dbReference type="PDB" id="8CEO">
    <property type="method" value="EM"/>
    <property type="resolution" value="3.60 A"/>
    <property type="chains" value="e=1-307"/>
</dbReference>
<dbReference type="PDBsum" id="2HZM"/>
<dbReference type="PDBsum" id="2HZS"/>
<dbReference type="PDBsum" id="3J1O"/>
<dbReference type="PDBsum" id="3RJ1"/>
<dbReference type="PDBsum" id="4GWP"/>
<dbReference type="PDBsum" id="4GWQ"/>
<dbReference type="PDBsum" id="4V1O"/>
<dbReference type="PDBsum" id="5OQM"/>
<dbReference type="PDBsum" id="5SVA"/>
<dbReference type="PDBsum" id="7UI9"/>
<dbReference type="PDBsum" id="7UIF"/>
<dbReference type="PDBsum" id="7UIG"/>
<dbReference type="PDBsum" id="7UIO"/>
<dbReference type="PDBsum" id="8CEN"/>
<dbReference type="PDBsum" id="8CEO"/>
<dbReference type="EMDB" id="EMD-26542"/>
<dbReference type="EMDB" id="EMD-26544"/>
<dbReference type="EMDB" id="EMD-26545"/>
<dbReference type="EMDB" id="EMD-26551"/>
<dbReference type="EMDB" id="EMD-2786"/>
<dbReference type="EMDB" id="EMD-3850"/>
<dbReference type="EMDB" id="EMD-8305"/>
<dbReference type="SMR" id="P32585"/>
<dbReference type="BioGRID" id="33347">
    <property type="interactions" value="99"/>
</dbReference>
<dbReference type="ComplexPortal" id="CPX-3226">
    <property type="entry name" value="Core mediator complex"/>
</dbReference>
<dbReference type="DIP" id="DIP-1658N"/>
<dbReference type="FunCoup" id="P32585">
    <property type="interactions" value="169"/>
</dbReference>
<dbReference type="IntAct" id="P32585">
    <property type="interactions" value="33"/>
</dbReference>
<dbReference type="MINT" id="P32585"/>
<dbReference type="STRING" id="4932.YGR104C"/>
<dbReference type="iPTMnet" id="P32585"/>
<dbReference type="PaxDb" id="4932-YGR104C"/>
<dbReference type="PeptideAtlas" id="P32585"/>
<dbReference type="EnsemblFungi" id="YGR104C_mRNA">
    <property type="protein sequence ID" value="YGR104C"/>
    <property type="gene ID" value="YGR104C"/>
</dbReference>
<dbReference type="GeneID" id="852996"/>
<dbReference type="KEGG" id="sce:YGR104C"/>
<dbReference type="AGR" id="SGD:S000003336"/>
<dbReference type="SGD" id="S000003336">
    <property type="gene designation" value="SRB5"/>
</dbReference>
<dbReference type="VEuPathDB" id="FungiDB:YGR104C"/>
<dbReference type="eggNOG" id="ENOG502RXWG">
    <property type="taxonomic scope" value="Eukaryota"/>
</dbReference>
<dbReference type="HOGENOM" id="CLU_058255_1_0_1"/>
<dbReference type="InParanoid" id="P32585"/>
<dbReference type="OMA" id="PDRKCMD"/>
<dbReference type="OrthoDB" id="5348092at2759"/>
<dbReference type="BioCyc" id="YEAST:G3O-30814-MONOMER"/>
<dbReference type="BioGRID-ORCS" id="852996">
    <property type="hits" value="0 hits in 10 CRISPR screens"/>
</dbReference>
<dbReference type="EvolutionaryTrace" id="P32585"/>
<dbReference type="PRO" id="PR:P32585"/>
<dbReference type="Proteomes" id="UP000002311">
    <property type="component" value="Chromosome VII"/>
</dbReference>
<dbReference type="RNAct" id="P32585">
    <property type="molecule type" value="protein"/>
</dbReference>
<dbReference type="GO" id="GO:0070847">
    <property type="term" value="C:core mediator complex"/>
    <property type="evidence" value="ECO:0000314"/>
    <property type="project" value="SGD"/>
</dbReference>
<dbReference type="GO" id="GO:0016592">
    <property type="term" value="C:mediator complex"/>
    <property type="evidence" value="ECO:0000318"/>
    <property type="project" value="GO_Central"/>
</dbReference>
<dbReference type="GO" id="GO:0005634">
    <property type="term" value="C:nucleus"/>
    <property type="evidence" value="ECO:0000314"/>
    <property type="project" value="ComplexPortal"/>
</dbReference>
<dbReference type="GO" id="GO:0000979">
    <property type="term" value="F:RNA polymerase II core promoter sequence-specific DNA binding"/>
    <property type="evidence" value="ECO:0000314"/>
    <property type="project" value="SGD"/>
</dbReference>
<dbReference type="GO" id="GO:0003713">
    <property type="term" value="F:transcription coactivator activity"/>
    <property type="evidence" value="ECO:0000315"/>
    <property type="project" value="SGD"/>
</dbReference>
<dbReference type="GO" id="GO:0003712">
    <property type="term" value="F:transcription coregulator activity"/>
    <property type="evidence" value="ECO:0000318"/>
    <property type="project" value="GO_Central"/>
</dbReference>
<dbReference type="GO" id="GO:0034605">
    <property type="term" value="P:cellular response to heat"/>
    <property type="evidence" value="ECO:0000314"/>
    <property type="project" value="SGD"/>
</dbReference>
<dbReference type="GO" id="GO:0045944">
    <property type="term" value="P:positive regulation of transcription by RNA polymerase II"/>
    <property type="evidence" value="ECO:0000314"/>
    <property type="project" value="SGD"/>
</dbReference>
<dbReference type="GO" id="GO:0032968">
    <property type="term" value="P:positive regulation of transcription elongation by RNA polymerase II"/>
    <property type="evidence" value="ECO:0000314"/>
    <property type="project" value="ComplexPortal"/>
</dbReference>
<dbReference type="GO" id="GO:0060261">
    <property type="term" value="P:positive regulation of transcription initiation by RNA polymerase II"/>
    <property type="evidence" value="ECO:0000314"/>
    <property type="project" value="ComplexPortal"/>
</dbReference>
<dbReference type="GO" id="GO:0051123">
    <property type="term" value="P:RNA polymerase II preinitiation complex assembly"/>
    <property type="evidence" value="ECO:0000314"/>
    <property type="project" value="ComplexPortal"/>
</dbReference>
<dbReference type="GO" id="GO:0006369">
    <property type="term" value="P:termination of RNA polymerase II transcription"/>
    <property type="evidence" value="ECO:0000315"/>
    <property type="project" value="SGD"/>
</dbReference>
<dbReference type="GO" id="GO:0001113">
    <property type="term" value="P:transcription open complex formation at RNA polymerase II promoter"/>
    <property type="evidence" value="ECO:0000315"/>
    <property type="project" value="SGD"/>
</dbReference>
<dbReference type="Gene3D" id="2.40.320.10">
    <property type="entry name" value="Hypothetical Protein Pfu-838710-001"/>
    <property type="match status" value="2"/>
</dbReference>
<dbReference type="InterPro" id="IPR019095">
    <property type="entry name" value="Mediator_Med18"/>
</dbReference>
<dbReference type="PANTHER" id="PTHR13321:SF2">
    <property type="entry name" value="MEDIATOR OF RNA POLYMERASE II TRANSCRIPTION SUBUNIT 18"/>
    <property type="match status" value="1"/>
</dbReference>
<dbReference type="PANTHER" id="PTHR13321">
    <property type="entry name" value="MEDIATOR OF RNA POLYMERASE II TRANSCRIPTION, SUBUNIT 18"/>
    <property type="match status" value="1"/>
</dbReference>
<dbReference type="Pfam" id="PF09637">
    <property type="entry name" value="Med18"/>
    <property type="match status" value="2"/>
</dbReference>
<sequence>MVQQLSLFGSIGDDGYDLLISTLTTISGNPPLLYNSLCTVWKPNPSYDVENVNSRNQLVEPNRIKLSKEVPFSYLIDETMMDKPLNFRILKSFTNDKIPLNYAMTRNILHNTVPQVTNFNSTNEDQNNSKHTEDTVNESRNSDDIIDVDMDASPAPSNESCSPWSLQISDIPAAGNNRSVSMQTIAETIILSSAGKNSSVSSLMNGLGYVFEFQYLTIGVKFFMKHGLILELQKIWQIEEAGNSQITSGGFLLKAYINVSRGTDIDRINYTETALMNLKKELQGYIELSVPDRQSMDSRVAHGNILI</sequence>
<proteinExistence type="evidence at protein level"/>